<organism>
    <name type="scientific">Yersinia pestis bv. Antiqua (strain Nepal516)</name>
    <dbReference type="NCBI Taxonomy" id="377628"/>
    <lineage>
        <taxon>Bacteria</taxon>
        <taxon>Pseudomonadati</taxon>
        <taxon>Pseudomonadota</taxon>
        <taxon>Gammaproteobacteria</taxon>
        <taxon>Enterobacterales</taxon>
        <taxon>Yersiniaceae</taxon>
        <taxon>Yersinia</taxon>
    </lineage>
</organism>
<proteinExistence type="inferred from homology"/>
<evidence type="ECO:0000255" key="1">
    <source>
        <dbReference type="HAMAP-Rule" id="MF_01062"/>
    </source>
</evidence>
<name>PSRP_YERPN</name>
<reference key="1">
    <citation type="journal article" date="2006" name="J. Bacteriol.">
        <title>Complete genome sequence of Yersinia pestis strains Antiqua and Nepal516: evidence of gene reduction in an emerging pathogen.</title>
        <authorList>
            <person name="Chain P.S.G."/>
            <person name="Hu P."/>
            <person name="Malfatti S.A."/>
            <person name="Radnedge L."/>
            <person name="Larimer F."/>
            <person name="Vergez L.M."/>
            <person name="Worsham P."/>
            <person name="Chu M.C."/>
            <person name="Andersen G.L."/>
        </authorList>
    </citation>
    <scope>NUCLEOTIDE SEQUENCE [LARGE SCALE GENOMIC DNA]</scope>
    <source>
        <strain>Nepal516</strain>
    </source>
</reference>
<reference key="2">
    <citation type="submission" date="2009-04" db="EMBL/GenBank/DDBJ databases">
        <title>Yersinia pestis Nepal516A whole genome shotgun sequencing project.</title>
        <authorList>
            <person name="Plunkett G. III"/>
            <person name="Anderson B.D."/>
            <person name="Baumler D.J."/>
            <person name="Burland V."/>
            <person name="Cabot E.L."/>
            <person name="Glasner J.D."/>
            <person name="Mau B."/>
            <person name="Neeno-Eckwall E."/>
            <person name="Perna N.T."/>
            <person name="Munk A.C."/>
            <person name="Tapia R."/>
            <person name="Green L.D."/>
            <person name="Rogers Y.C."/>
            <person name="Detter J.C."/>
            <person name="Bruce D.C."/>
            <person name="Brettin T.S."/>
        </authorList>
    </citation>
    <scope>NUCLEOTIDE SEQUENCE [LARGE SCALE GENOMIC DNA]</scope>
    <source>
        <strain>Nepal516</strain>
    </source>
</reference>
<gene>
    <name type="ordered locus">YPN_1864</name>
    <name type="ORF">YP516_2073</name>
</gene>
<feature type="chain" id="PRO_0000316759" description="Putative phosphoenolpyruvate synthase regulatory protein">
    <location>
        <begin position="1"/>
        <end position="273"/>
    </location>
</feature>
<feature type="binding site" evidence="1">
    <location>
        <begin position="153"/>
        <end position="160"/>
    </location>
    <ligand>
        <name>ADP</name>
        <dbReference type="ChEBI" id="CHEBI:456216"/>
    </ligand>
</feature>
<comment type="function">
    <text evidence="1">Bifunctional serine/threonine kinase and phosphorylase involved in the regulation of the phosphoenolpyruvate synthase (PEPS) by catalyzing its phosphorylation/dephosphorylation.</text>
</comment>
<comment type="catalytic activity">
    <reaction evidence="1">
        <text>[pyruvate, water dikinase] + ADP = [pyruvate, water dikinase]-phosphate + AMP + H(+)</text>
        <dbReference type="Rhea" id="RHEA:46020"/>
        <dbReference type="Rhea" id="RHEA-COMP:11425"/>
        <dbReference type="Rhea" id="RHEA-COMP:11426"/>
        <dbReference type="ChEBI" id="CHEBI:15378"/>
        <dbReference type="ChEBI" id="CHEBI:43176"/>
        <dbReference type="ChEBI" id="CHEBI:68546"/>
        <dbReference type="ChEBI" id="CHEBI:456215"/>
        <dbReference type="ChEBI" id="CHEBI:456216"/>
        <dbReference type="EC" id="2.7.11.33"/>
    </reaction>
</comment>
<comment type="catalytic activity">
    <reaction evidence="1">
        <text>[pyruvate, water dikinase]-phosphate + phosphate + H(+) = [pyruvate, water dikinase] + diphosphate</text>
        <dbReference type="Rhea" id="RHEA:48580"/>
        <dbReference type="Rhea" id="RHEA-COMP:11425"/>
        <dbReference type="Rhea" id="RHEA-COMP:11426"/>
        <dbReference type="ChEBI" id="CHEBI:15378"/>
        <dbReference type="ChEBI" id="CHEBI:33019"/>
        <dbReference type="ChEBI" id="CHEBI:43176"/>
        <dbReference type="ChEBI" id="CHEBI:43474"/>
        <dbReference type="ChEBI" id="CHEBI:68546"/>
        <dbReference type="EC" id="2.7.4.28"/>
    </reaction>
</comment>
<comment type="similarity">
    <text evidence="1">Belongs to the pyruvate, phosphate/water dikinase regulatory protein family. PSRP subfamily.</text>
</comment>
<protein>
    <recommendedName>
        <fullName evidence="1">Putative phosphoenolpyruvate synthase regulatory protein</fullName>
        <shortName evidence="1">PEP synthase regulatory protein</shortName>
        <shortName evidence="1">PSRP</shortName>
        <ecNumber evidence="1">2.7.11.33</ecNumber>
        <ecNumber evidence="1">2.7.4.28</ecNumber>
    </recommendedName>
    <alternativeName>
        <fullName evidence="1">Pyruvate, water dikinase regulatory protein</fullName>
    </alternativeName>
</protein>
<dbReference type="EC" id="2.7.11.33" evidence="1"/>
<dbReference type="EC" id="2.7.4.28" evidence="1"/>
<dbReference type="EMBL" id="CP000305">
    <property type="protein sequence ID" value="ABG18193.1"/>
    <property type="molecule type" value="Genomic_DNA"/>
</dbReference>
<dbReference type="EMBL" id="ACNQ01000010">
    <property type="protein sequence ID" value="EEO76769.1"/>
    <property type="molecule type" value="Genomic_DNA"/>
</dbReference>
<dbReference type="RefSeq" id="WP_002211814.1">
    <property type="nucleotide sequence ID" value="NZ_ACNQ01000010.1"/>
</dbReference>
<dbReference type="SMR" id="Q1CII7"/>
<dbReference type="KEGG" id="ypn:YPN_1864"/>
<dbReference type="HOGENOM" id="CLU_046206_1_0_6"/>
<dbReference type="Proteomes" id="UP000008936">
    <property type="component" value="Chromosome"/>
</dbReference>
<dbReference type="GO" id="GO:0043531">
    <property type="term" value="F:ADP binding"/>
    <property type="evidence" value="ECO:0007669"/>
    <property type="project" value="UniProtKB-UniRule"/>
</dbReference>
<dbReference type="GO" id="GO:0005524">
    <property type="term" value="F:ATP binding"/>
    <property type="evidence" value="ECO:0007669"/>
    <property type="project" value="InterPro"/>
</dbReference>
<dbReference type="GO" id="GO:0003677">
    <property type="term" value="F:DNA binding"/>
    <property type="evidence" value="ECO:0007669"/>
    <property type="project" value="InterPro"/>
</dbReference>
<dbReference type="GO" id="GO:0016776">
    <property type="term" value="F:phosphotransferase activity, phosphate group as acceptor"/>
    <property type="evidence" value="ECO:0007669"/>
    <property type="project" value="UniProtKB-UniRule"/>
</dbReference>
<dbReference type="GO" id="GO:0004674">
    <property type="term" value="F:protein serine/threonine kinase activity"/>
    <property type="evidence" value="ECO:0007669"/>
    <property type="project" value="UniProtKB-UniRule"/>
</dbReference>
<dbReference type="GO" id="GO:0006355">
    <property type="term" value="P:regulation of DNA-templated transcription"/>
    <property type="evidence" value="ECO:0007669"/>
    <property type="project" value="InterPro"/>
</dbReference>
<dbReference type="HAMAP" id="MF_01062">
    <property type="entry name" value="PSRP"/>
    <property type="match status" value="1"/>
</dbReference>
<dbReference type="InterPro" id="IPR005177">
    <property type="entry name" value="Kinase-pyrophosphorylase"/>
</dbReference>
<dbReference type="InterPro" id="IPR026530">
    <property type="entry name" value="PSRP"/>
</dbReference>
<dbReference type="InterPro" id="IPR008917">
    <property type="entry name" value="TF_DNA-bd_sf"/>
</dbReference>
<dbReference type="NCBIfam" id="NF003742">
    <property type="entry name" value="PRK05339.1"/>
    <property type="match status" value="1"/>
</dbReference>
<dbReference type="PANTHER" id="PTHR31756">
    <property type="entry name" value="PYRUVATE, PHOSPHATE DIKINASE REGULATORY PROTEIN 1, CHLOROPLASTIC"/>
    <property type="match status" value="1"/>
</dbReference>
<dbReference type="PANTHER" id="PTHR31756:SF3">
    <property type="entry name" value="PYRUVATE, PHOSPHATE DIKINASE REGULATORY PROTEIN 1, CHLOROPLASTIC"/>
    <property type="match status" value="1"/>
</dbReference>
<dbReference type="Pfam" id="PF03618">
    <property type="entry name" value="Kinase-PPPase"/>
    <property type="match status" value="1"/>
</dbReference>
<dbReference type="SUPFAM" id="SSF47454">
    <property type="entry name" value="A DNA-binding domain in eukaryotic transcription factors"/>
    <property type="match status" value="1"/>
</dbReference>
<accession>Q1CII7</accession>
<accession>C4GTG8</accession>
<sequence>MERCVFYISDGTAITAEVLGHAVLSQFPINVTTFTLPFVENAARAQSVCKQINEIYQDTGVRPLVFYSIISLEVREIIQRSEGFCQDIVQALVAPLQGELGVPPQPVLNRTHGLTESNLDKYDARIAAIDYALAHDDGISLRNLDQAQVILLGVSRCGKTPTSLYLAMQFGIRAANYPFIADDMDNLQLPAALKPFQHKLFGLTINPERLAAIREERRENSRYASLRQCRMEVGEVEALFRKNQIRYLNSTNYSVEEISTKILDILGMSRRMF</sequence>
<keyword id="KW-0418">Kinase</keyword>
<keyword id="KW-0547">Nucleotide-binding</keyword>
<keyword id="KW-0723">Serine/threonine-protein kinase</keyword>
<keyword id="KW-0808">Transferase</keyword>